<sequence>MATYYSNDFRAGLKIMLDGEPYAVEASEFVKPGKGQAFARVKLRRLLTGTRVEKTFKSTDSAEGADVVDMNLTYLYNDGEFWHFMNNETFEQLSADAKAIGDNAKWLLDQAECIVTLWNGQPISVTPPNFVELEIVDTDPGLKGDTAGTGGKPATLSTGAVVKVPLFVQIGEVIKVDTRSGEYVSRVK</sequence>
<feature type="chain" id="PRO_1000057922" description="Elongation factor P">
    <location>
        <begin position="1"/>
        <end position="188"/>
    </location>
</feature>
<feature type="modified residue" description="N6-(3,6-diaminohexanoyl)-5-hydroxylysine" evidence="1">
    <location>
        <position position="34"/>
    </location>
</feature>
<reference key="1">
    <citation type="journal article" date="2008" name="J. Bacteriol.">
        <title>The pangenome structure of Escherichia coli: comparative genomic analysis of E. coli commensal and pathogenic isolates.</title>
        <authorList>
            <person name="Rasko D.A."/>
            <person name="Rosovitz M.J."/>
            <person name="Myers G.S.A."/>
            <person name="Mongodin E.F."/>
            <person name="Fricke W.F."/>
            <person name="Gajer P."/>
            <person name="Crabtree J."/>
            <person name="Sebaihia M."/>
            <person name="Thomson N.R."/>
            <person name="Chaudhuri R."/>
            <person name="Henderson I.R."/>
            <person name="Sperandio V."/>
            <person name="Ravel J."/>
        </authorList>
    </citation>
    <scope>NUCLEOTIDE SEQUENCE [LARGE SCALE GENOMIC DNA]</scope>
    <source>
        <strain>HS</strain>
    </source>
</reference>
<evidence type="ECO:0000255" key="1">
    <source>
        <dbReference type="HAMAP-Rule" id="MF_00141"/>
    </source>
</evidence>
<comment type="function">
    <text evidence="1">Involved in peptide bond synthesis. Alleviates ribosome stalling that occurs when 3 or more consecutive Pro residues or the sequence PPG is present in a protein, possibly by augmenting the peptidyl transferase activity of the ribosome. Modification of Lys-34 is required for alleviation.</text>
</comment>
<comment type="pathway">
    <text evidence="1">Protein biosynthesis; polypeptide chain elongation.</text>
</comment>
<comment type="subcellular location">
    <subcellularLocation>
        <location evidence="1">Cytoplasm</location>
    </subcellularLocation>
</comment>
<comment type="PTM">
    <text evidence="1">Is beta-lysylated on the epsilon-amino group of Lys-34 by the combined action of EpmA and EpmB, and then hydroxylated on the C5 position of the same residue by EpmC. Lysylation is critical for the stimulatory effect of EF-P on peptide-bond formation. The lysylation moiety would extend toward the peptidyltransferase center and stabilize the terminal 3-CCA end of the tRNA. The hydroxylation of the C5 position on Lys-34 would allow additional potential stabilizing hydrogen-bond interactions with the P-tRNA.</text>
</comment>
<comment type="similarity">
    <text evidence="1">Belongs to the elongation factor P family.</text>
</comment>
<organism>
    <name type="scientific">Escherichia coli O9:H4 (strain HS)</name>
    <dbReference type="NCBI Taxonomy" id="331112"/>
    <lineage>
        <taxon>Bacteria</taxon>
        <taxon>Pseudomonadati</taxon>
        <taxon>Pseudomonadota</taxon>
        <taxon>Gammaproteobacteria</taxon>
        <taxon>Enterobacterales</taxon>
        <taxon>Enterobacteriaceae</taxon>
        <taxon>Escherichia</taxon>
    </lineage>
</organism>
<accession>A8A7P4</accession>
<name>EFP_ECOHS</name>
<keyword id="KW-0963">Cytoplasm</keyword>
<keyword id="KW-0251">Elongation factor</keyword>
<keyword id="KW-0379">Hydroxylation</keyword>
<keyword id="KW-0648">Protein biosynthesis</keyword>
<gene>
    <name evidence="1" type="primary">efp</name>
    <name type="ordered locus">EcHS_A4389</name>
</gene>
<protein>
    <recommendedName>
        <fullName evidence="1">Elongation factor P</fullName>
        <shortName evidence="1">EF-P</shortName>
    </recommendedName>
</protein>
<dbReference type="EMBL" id="CP000802">
    <property type="protein sequence ID" value="ABV08548.1"/>
    <property type="molecule type" value="Genomic_DNA"/>
</dbReference>
<dbReference type="RefSeq" id="WP_000257278.1">
    <property type="nucleotide sequence ID" value="NC_009800.1"/>
</dbReference>
<dbReference type="SMR" id="A8A7P4"/>
<dbReference type="GeneID" id="93777677"/>
<dbReference type="KEGG" id="ecx:EcHS_A4389"/>
<dbReference type="HOGENOM" id="CLU_074944_0_0_6"/>
<dbReference type="UniPathway" id="UPA00345"/>
<dbReference type="GO" id="GO:0005829">
    <property type="term" value="C:cytosol"/>
    <property type="evidence" value="ECO:0007669"/>
    <property type="project" value="UniProtKB-ARBA"/>
</dbReference>
<dbReference type="GO" id="GO:0003746">
    <property type="term" value="F:translation elongation factor activity"/>
    <property type="evidence" value="ECO:0007669"/>
    <property type="project" value="UniProtKB-UniRule"/>
</dbReference>
<dbReference type="GO" id="GO:0043043">
    <property type="term" value="P:peptide biosynthetic process"/>
    <property type="evidence" value="ECO:0007669"/>
    <property type="project" value="InterPro"/>
</dbReference>
<dbReference type="CDD" id="cd04470">
    <property type="entry name" value="S1_EF-P_repeat_1"/>
    <property type="match status" value="1"/>
</dbReference>
<dbReference type="CDD" id="cd05794">
    <property type="entry name" value="S1_EF-P_repeat_2"/>
    <property type="match status" value="1"/>
</dbReference>
<dbReference type="FunFam" id="2.30.30.30:FF:000003">
    <property type="entry name" value="Elongation factor P"/>
    <property type="match status" value="1"/>
</dbReference>
<dbReference type="FunFam" id="2.40.50.140:FF:000004">
    <property type="entry name" value="Elongation factor P"/>
    <property type="match status" value="1"/>
</dbReference>
<dbReference type="FunFam" id="2.40.50.140:FF:000009">
    <property type="entry name" value="Elongation factor P"/>
    <property type="match status" value="1"/>
</dbReference>
<dbReference type="Gene3D" id="2.30.30.30">
    <property type="match status" value="1"/>
</dbReference>
<dbReference type="Gene3D" id="2.40.50.140">
    <property type="entry name" value="Nucleic acid-binding proteins"/>
    <property type="match status" value="2"/>
</dbReference>
<dbReference type="HAMAP" id="MF_00141">
    <property type="entry name" value="EF_P"/>
    <property type="match status" value="1"/>
</dbReference>
<dbReference type="InterPro" id="IPR015365">
    <property type="entry name" value="Elong-fact-P_C"/>
</dbReference>
<dbReference type="InterPro" id="IPR012340">
    <property type="entry name" value="NA-bd_OB-fold"/>
</dbReference>
<dbReference type="InterPro" id="IPR014722">
    <property type="entry name" value="Rib_uL2_dom2"/>
</dbReference>
<dbReference type="InterPro" id="IPR020599">
    <property type="entry name" value="Transl_elong_fac_P/YeiP"/>
</dbReference>
<dbReference type="InterPro" id="IPR013185">
    <property type="entry name" value="Transl_elong_KOW-like"/>
</dbReference>
<dbReference type="InterPro" id="IPR001059">
    <property type="entry name" value="Transl_elong_P/YeiP_cen"/>
</dbReference>
<dbReference type="InterPro" id="IPR013852">
    <property type="entry name" value="Transl_elong_P/YeiP_CS"/>
</dbReference>
<dbReference type="InterPro" id="IPR011768">
    <property type="entry name" value="Transl_elongation_fac_P"/>
</dbReference>
<dbReference type="InterPro" id="IPR008991">
    <property type="entry name" value="Translation_prot_SH3-like_sf"/>
</dbReference>
<dbReference type="NCBIfam" id="TIGR00038">
    <property type="entry name" value="efp"/>
    <property type="match status" value="1"/>
</dbReference>
<dbReference type="NCBIfam" id="NF001810">
    <property type="entry name" value="PRK00529.1"/>
    <property type="match status" value="1"/>
</dbReference>
<dbReference type="PANTHER" id="PTHR30053">
    <property type="entry name" value="ELONGATION FACTOR P"/>
    <property type="match status" value="1"/>
</dbReference>
<dbReference type="PANTHER" id="PTHR30053:SF12">
    <property type="entry name" value="ELONGATION FACTOR P (EF-P) FAMILY PROTEIN"/>
    <property type="match status" value="1"/>
</dbReference>
<dbReference type="Pfam" id="PF01132">
    <property type="entry name" value="EFP"/>
    <property type="match status" value="1"/>
</dbReference>
<dbReference type="Pfam" id="PF08207">
    <property type="entry name" value="EFP_N"/>
    <property type="match status" value="1"/>
</dbReference>
<dbReference type="Pfam" id="PF09285">
    <property type="entry name" value="Elong-fact-P_C"/>
    <property type="match status" value="1"/>
</dbReference>
<dbReference type="PIRSF" id="PIRSF005901">
    <property type="entry name" value="EF-P"/>
    <property type="match status" value="1"/>
</dbReference>
<dbReference type="SMART" id="SM01185">
    <property type="entry name" value="EFP"/>
    <property type="match status" value="1"/>
</dbReference>
<dbReference type="SMART" id="SM00841">
    <property type="entry name" value="Elong-fact-P_C"/>
    <property type="match status" value="1"/>
</dbReference>
<dbReference type="SUPFAM" id="SSF50249">
    <property type="entry name" value="Nucleic acid-binding proteins"/>
    <property type="match status" value="2"/>
</dbReference>
<dbReference type="SUPFAM" id="SSF50104">
    <property type="entry name" value="Translation proteins SH3-like domain"/>
    <property type="match status" value="1"/>
</dbReference>
<dbReference type="PROSITE" id="PS01275">
    <property type="entry name" value="EFP"/>
    <property type="match status" value="1"/>
</dbReference>
<proteinExistence type="inferred from homology"/>